<dbReference type="EC" id="7.4.2.8" evidence="1"/>
<dbReference type="EMBL" id="BX640449">
    <property type="protein sequence ID" value="CAE34553.1"/>
    <property type="molecule type" value="Genomic_DNA"/>
</dbReference>
<dbReference type="RefSeq" id="WP_003814564.1">
    <property type="nucleotide sequence ID" value="NC_002927.3"/>
</dbReference>
<dbReference type="SMR" id="Q7WFT1"/>
<dbReference type="GeneID" id="69602937"/>
<dbReference type="KEGG" id="bbr:BB4189"/>
<dbReference type="eggNOG" id="COG0653">
    <property type="taxonomic scope" value="Bacteria"/>
</dbReference>
<dbReference type="HOGENOM" id="CLU_005314_3_0_4"/>
<dbReference type="Proteomes" id="UP000001027">
    <property type="component" value="Chromosome"/>
</dbReference>
<dbReference type="GO" id="GO:0031522">
    <property type="term" value="C:cell envelope Sec protein transport complex"/>
    <property type="evidence" value="ECO:0007669"/>
    <property type="project" value="TreeGrafter"/>
</dbReference>
<dbReference type="GO" id="GO:0005829">
    <property type="term" value="C:cytosol"/>
    <property type="evidence" value="ECO:0007669"/>
    <property type="project" value="TreeGrafter"/>
</dbReference>
<dbReference type="GO" id="GO:0005886">
    <property type="term" value="C:plasma membrane"/>
    <property type="evidence" value="ECO:0007669"/>
    <property type="project" value="UniProtKB-SubCell"/>
</dbReference>
<dbReference type="GO" id="GO:0005524">
    <property type="term" value="F:ATP binding"/>
    <property type="evidence" value="ECO:0007669"/>
    <property type="project" value="UniProtKB-UniRule"/>
</dbReference>
<dbReference type="GO" id="GO:0046872">
    <property type="term" value="F:metal ion binding"/>
    <property type="evidence" value="ECO:0007669"/>
    <property type="project" value="UniProtKB-KW"/>
</dbReference>
<dbReference type="GO" id="GO:0008564">
    <property type="term" value="F:protein-exporting ATPase activity"/>
    <property type="evidence" value="ECO:0007669"/>
    <property type="project" value="UniProtKB-EC"/>
</dbReference>
<dbReference type="GO" id="GO:0065002">
    <property type="term" value="P:intracellular protein transmembrane transport"/>
    <property type="evidence" value="ECO:0007669"/>
    <property type="project" value="UniProtKB-UniRule"/>
</dbReference>
<dbReference type="GO" id="GO:0017038">
    <property type="term" value="P:protein import"/>
    <property type="evidence" value="ECO:0007669"/>
    <property type="project" value="InterPro"/>
</dbReference>
<dbReference type="GO" id="GO:0006605">
    <property type="term" value="P:protein targeting"/>
    <property type="evidence" value="ECO:0007669"/>
    <property type="project" value="UniProtKB-UniRule"/>
</dbReference>
<dbReference type="GO" id="GO:0043952">
    <property type="term" value="P:protein transport by the Sec complex"/>
    <property type="evidence" value="ECO:0007669"/>
    <property type="project" value="TreeGrafter"/>
</dbReference>
<dbReference type="CDD" id="cd17928">
    <property type="entry name" value="DEXDc_SecA"/>
    <property type="match status" value="1"/>
</dbReference>
<dbReference type="CDD" id="cd18803">
    <property type="entry name" value="SF2_C_secA"/>
    <property type="match status" value="1"/>
</dbReference>
<dbReference type="FunFam" id="3.40.50.300:FF:000113">
    <property type="entry name" value="Preprotein translocase subunit SecA"/>
    <property type="match status" value="1"/>
</dbReference>
<dbReference type="FunFam" id="3.90.1440.10:FF:000001">
    <property type="entry name" value="Preprotein translocase subunit SecA"/>
    <property type="match status" value="1"/>
</dbReference>
<dbReference type="FunFam" id="1.10.3060.10:FF:000003">
    <property type="entry name" value="Protein translocase subunit SecA"/>
    <property type="match status" value="1"/>
</dbReference>
<dbReference type="FunFam" id="3.40.50.300:FF:000334">
    <property type="entry name" value="Protein translocase subunit SecA"/>
    <property type="match status" value="1"/>
</dbReference>
<dbReference type="Gene3D" id="1.10.3060.10">
    <property type="entry name" value="Helical scaffold and wing domains of SecA"/>
    <property type="match status" value="1"/>
</dbReference>
<dbReference type="Gene3D" id="3.40.50.300">
    <property type="entry name" value="P-loop containing nucleotide triphosphate hydrolases"/>
    <property type="match status" value="2"/>
</dbReference>
<dbReference type="Gene3D" id="3.90.1440.10">
    <property type="entry name" value="SecA, preprotein cross-linking domain"/>
    <property type="match status" value="1"/>
</dbReference>
<dbReference type="HAMAP" id="MF_01382">
    <property type="entry name" value="SecA"/>
    <property type="match status" value="1"/>
</dbReference>
<dbReference type="InterPro" id="IPR014001">
    <property type="entry name" value="Helicase_ATP-bd"/>
</dbReference>
<dbReference type="InterPro" id="IPR001650">
    <property type="entry name" value="Helicase_C-like"/>
</dbReference>
<dbReference type="InterPro" id="IPR027417">
    <property type="entry name" value="P-loop_NTPase"/>
</dbReference>
<dbReference type="InterPro" id="IPR004027">
    <property type="entry name" value="SEC_C_motif"/>
</dbReference>
<dbReference type="InterPro" id="IPR000185">
    <property type="entry name" value="SecA"/>
</dbReference>
<dbReference type="InterPro" id="IPR020937">
    <property type="entry name" value="SecA_CS"/>
</dbReference>
<dbReference type="InterPro" id="IPR011115">
    <property type="entry name" value="SecA_DEAD"/>
</dbReference>
<dbReference type="InterPro" id="IPR014018">
    <property type="entry name" value="SecA_motor_DEAD"/>
</dbReference>
<dbReference type="InterPro" id="IPR011130">
    <property type="entry name" value="SecA_preprotein_X-link_dom"/>
</dbReference>
<dbReference type="InterPro" id="IPR044722">
    <property type="entry name" value="SecA_SF2_C"/>
</dbReference>
<dbReference type="InterPro" id="IPR011116">
    <property type="entry name" value="SecA_Wing/Scaffold"/>
</dbReference>
<dbReference type="InterPro" id="IPR036266">
    <property type="entry name" value="SecA_Wing/Scaffold_sf"/>
</dbReference>
<dbReference type="InterPro" id="IPR036670">
    <property type="entry name" value="SecA_X-link_sf"/>
</dbReference>
<dbReference type="NCBIfam" id="NF009538">
    <property type="entry name" value="PRK12904.1"/>
    <property type="match status" value="1"/>
</dbReference>
<dbReference type="NCBIfam" id="TIGR00963">
    <property type="entry name" value="secA"/>
    <property type="match status" value="1"/>
</dbReference>
<dbReference type="PANTHER" id="PTHR30612:SF0">
    <property type="entry name" value="CHLOROPLAST PROTEIN-TRANSPORTING ATPASE"/>
    <property type="match status" value="1"/>
</dbReference>
<dbReference type="PANTHER" id="PTHR30612">
    <property type="entry name" value="SECA INNER MEMBRANE COMPONENT OF SEC PROTEIN SECRETION SYSTEM"/>
    <property type="match status" value="1"/>
</dbReference>
<dbReference type="Pfam" id="PF21090">
    <property type="entry name" value="P-loop_SecA"/>
    <property type="match status" value="1"/>
</dbReference>
<dbReference type="Pfam" id="PF02810">
    <property type="entry name" value="SEC-C"/>
    <property type="match status" value="1"/>
</dbReference>
<dbReference type="Pfam" id="PF07517">
    <property type="entry name" value="SecA_DEAD"/>
    <property type="match status" value="1"/>
</dbReference>
<dbReference type="Pfam" id="PF01043">
    <property type="entry name" value="SecA_PP_bind"/>
    <property type="match status" value="1"/>
</dbReference>
<dbReference type="Pfam" id="PF07516">
    <property type="entry name" value="SecA_SW"/>
    <property type="match status" value="1"/>
</dbReference>
<dbReference type="PRINTS" id="PR00906">
    <property type="entry name" value="SECA"/>
</dbReference>
<dbReference type="SMART" id="SM00957">
    <property type="entry name" value="SecA_DEAD"/>
    <property type="match status" value="1"/>
</dbReference>
<dbReference type="SMART" id="SM00958">
    <property type="entry name" value="SecA_PP_bind"/>
    <property type="match status" value="1"/>
</dbReference>
<dbReference type="SUPFAM" id="SSF81886">
    <property type="entry name" value="Helical scaffold and wing domains of SecA"/>
    <property type="match status" value="1"/>
</dbReference>
<dbReference type="SUPFAM" id="SSF52540">
    <property type="entry name" value="P-loop containing nucleoside triphosphate hydrolases"/>
    <property type="match status" value="2"/>
</dbReference>
<dbReference type="SUPFAM" id="SSF81767">
    <property type="entry name" value="Pre-protein crosslinking domain of SecA"/>
    <property type="match status" value="1"/>
</dbReference>
<dbReference type="PROSITE" id="PS01312">
    <property type="entry name" value="SECA"/>
    <property type="match status" value="1"/>
</dbReference>
<dbReference type="PROSITE" id="PS51196">
    <property type="entry name" value="SECA_MOTOR_DEAD"/>
    <property type="match status" value="1"/>
</dbReference>
<reference key="1">
    <citation type="journal article" date="2003" name="Nat. Genet.">
        <title>Comparative analysis of the genome sequences of Bordetella pertussis, Bordetella parapertussis and Bordetella bronchiseptica.</title>
        <authorList>
            <person name="Parkhill J."/>
            <person name="Sebaihia M."/>
            <person name="Preston A."/>
            <person name="Murphy L.D."/>
            <person name="Thomson N.R."/>
            <person name="Harris D.E."/>
            <person name="Holden M.T.G."/>
            <person name="Churcher C.M."/>
            <person name="Bentley S.D."/>
            <person name="Mungall K.L."/>
            <person name="Cerdeno-Tarraga A.-M."/>
            <person name="Temple L."/>
            <person name="James K.D."/>
            <person name="Harris B."/>
            <person name="Quail M.A."/>
            <person name="Achtman M."/>
            <person name="Atkin R."/>
            <person name="Baker S."/>
            <person name="Basham D."/>
            <person name="Bason N."/>
            <person name="Cherevach I."/>
            <person name="Chillingworth T."/>
            <person name="Collins M."/>
            <person name="Cronin A."/>
            <person name="Davis P."/>
            <person name="Doggett J."/>
            <person name="Feltwell T."/>
            <person name="Goble A."/>
            <person name="Hamlin N."/>
            <person name="Hauser H."/>
            <person name="Holroyd S."/>
            <person name="Jagels K."/>
            <person name="Leather S."/>
            <person name="Moule S."/>
            <person name="Norberczak H."/>
            <person name="O'Neil S."/>
            <person name="Ormond D."/>
            <person name="Price C."/>
            <person name="Rabbinowitsch E."/>
            <person name="Rutter S."/>
            <person name="Sanders M."/>
            <person name="Saunders D."/>
            <person name="Seeger K."/>
            <person name="Sharp S."/>
            <person name="Simmonds M."/>
            <person name="Skelton J."/>
            <person name="Squares R."/>
            <person name="Squares S."/>
            <person name="Stevens K."/>
            <person name="Unwin L."/>
            <person name="Whitehead S."/>
            <person name="Barrell B.G."/>
            <person name="Maskell D.J."/>
        </authorList>
    </citation>
    <scope>NUCLEOTIDE SEQUENCE [LARGE SCALE GENOMIC DNA]</scope>
    <source>
        <strain>ATCC BAA-588 / NCTC 13252 / RB50</strain>
    </source>
</reference>
<gene>
    <name evidence="1" type="primary">secA</name>
    <name type="ordered locus">BB4189</name>
</gene>
<comment type="function">
    <text evidence="1">Part of the Sec protein translocase complex. Interacts with the SecYEG preprotein conducting channel. Has a central role in coupling the hydrolysis of ATP to the transfer of proteins into and across the cell membrane, serving both as a receptor for the preprotein-SecB complex and as an ATP-driven molecular motor driving the stepwise translocation of polypeptide chains across the membrane.</text>
</comment>
<comment type="catalytic activity">
    <reaction evidence="1">
        <text>ATP + H2O + cellular proteinSide 1 = ADP + phosphate + cellular proteinSide 2.</text>
        <dbReference type="EC" id="7.4.2.8"/>
    </reaction>
</comment>
<comment type="cofactor">
    <cofactor evidence="1">
        <name>Zn(2+)</name>
        <dbReference type="ChEBI" id="CHEBI:29105"/>
    </cofactor>
    <text evidence="1">May bind 1 zinc ion per subunit.</text>
</comment>
<comment type="subunit">
    <text evidence="1">Monomer and homodimer. Part of the essential Sec protein translocation apparatus which comprises SecA, SecYEG and auxiliary proteins SecDF-YajC and YidC.</text>
</comment>
<comment type="subcellular location">
    <subcellularLocation>
        <location evidence="1">Cell inner membrane</location>
        <topology evidence="1">Peripheral membrane protein</topology>
        <orientation evidence="1">Cytoplasmic side</orientation>
    </subcellularLocation>
    <subcellularLocation>
        <location evidence="1">Cytoplasm</location>
    </subcellularLocation>
    <text evidence="1">Distribution is 50-50.</text>
</comment>
<comment type="similarity">
    <text evidence="1">Belongs to the SecA family.</text>
</comment>
<sequence length="911" mass="103302">MVSLLKKLIGSRNDRLLKEYRKQVAQINSLEPKISALSDEELSAKTQEFRDRHQQGTSLDDLLPEAFAVVREAGKRVFGMRHFDVQMLGGIALHNGKIAEMRTGEGKTLMATLPVYLNAIAGKGVHVVTVNDYLARRDAEWMGRLYRFLGMSTGVVVPQQPNDEKIAAYAADITYGTNNEFGFDYLRDNMEYRVEDRRQRRLFYAIVDEVDSILIDEARTPLIISGQAEDHTELYVRMNAVPPLLKRMASEPKPHEPEPEGDYWVDEKSQQVYMSEAGHESAEKILTRVGLLPEGESLYDPRHIALMHHMMVALRAHTLFFRDQQYVVQDDEVVIVDEFTGRLMVGRRWSDGLHQAVEAKEGVKIQHENQTLASITFQNYFRMYDKLSGMTGTADTEAYEFQEIYTLETVIIPTNKPMVRKDQNDQVFKTTQEKYQAILNDIRDCHERGQPVLVGTTSIENSELLAGLLRQAKLPHEVLNAKQHAREAEIVAEAGKPGHITIATNMAGRGTDIVLGGSVDKQVDLIHANEALSEAEKEARIETLRAEWKPLNERVKQAGGLRIIGTERHESRRIDNQLRGRAGRQGDPGSSRFYLSLEDPLMRIFAGDRVRAIMERLKLPEGEPIEAGMVTRSIETAQRKVEGRNFDIRKQLLEYDDVANDQRKVLYSQRNEVLEAASIGATVEGLRDAAVAEMFRGFIPEESVEEQWDVAGLEKALAGDWHIQLPLTDMLEQEPNLTDEELLERVVAAARQIYTAKVEQVGAESWAQFERSIMLQSIDTHWREHLSALDYLRQGIHLRGYAQKNPKQEYKREAFELFSGMLDRIRDDVVRVLMTVRVQSAEQVEQAEADAAQPHVQNVQYHHSDYDEALADDGQPQGAQPVRNVLPKVGRNEPCPCGSGKKYKHCHGQLA</sequence>
<feature type="chain" id="PRO_0000320739" description="Protein translocase subunit SecA">
    <location>
        <begin position="1"/>
        <end position="911"/>
    </location>
</feature>
<feature type="binding site" evidence="1">
    <location>
        <position position="86"/>
    </location>
    <ligand>
        <name>ATP</name>
        <dbReference type="ChEBI" id="CHEBI:30616"/>
    </ligand>
</feature>
<feature type="binding site" evidence="1">
    <location>
        <begin position="104"/>
        <end position="108"/>
    </location>
    <ligand>
        <name>ATP</name>
        <dbReference type="ChEBI" id="CHEBI:30616"/>
    </ligand>
</feature>
<feature type="binding site" evidence="1">
    <location>
        <position position="512"/>
    </location>
    <ligand>
        <name>ATP</name>
        <dbReference type="ChEBI" id="CHEBI:30616"/>
    </ligand>
</feature>
<feature type="binding site" evidence="1">
    <location>
        <position position="895"/>
    </location>
    <ligand>
        <name>Zn(2+)</name>
        <dbReference type="ChEBI" id="CHEBI:29105"/>
    </ligand>
</feature>
<feature type="binding site" evidence="1">
    <location>
        <position position="897"/>
    </location>
    <ligand>
        <name>Zn(2+)</name>
        <dbReference type="ChEBI" id="CHEBI:29105"/>
    </ligand>
</feature>
<feature type="binding site" evidence="1">
    <location>
        <position position="906"/>
    </location>
    <ligand>
        <name>Zn(2+)</name>
        <dbReference type="ChEBI" id="CHEBI:29105"/>
    </ligand>
</feature>
<feature type="binding site" evidence="1">
    <location>
        <position position="907"/>
    </location>
    <ligand>
        <name>Zn(2+)</name>
        <dbReference type="ChEBI" id="CHEBI:29105"/>
    </ligand>
</feature>
<name>SECA_BORBR</name>
<proteinExistence type="inferred from homology"/>
<keyword id="KW-0067">ATP-binding</keyword>
<keyword id="KW-0997">Cell inner membrane</keyword>
<keyword id="KW-1003">Cell membrane</keyword>
<keyword id="KW-0963">Cytoplasm</keyword>
<keyword id="KW-0472">Membrane</keyword>
<keyword id="KW-0479">Metal-binding</keyword>
<keyword id="KW-0547">Nucleotide-binding</keyword>
<keyword id="KW-0653">Protein transport</keyword>
<keyword id="KW-1278">Translocase</keyword>
<keyword id="KW-0811">Translocation</keyword>
<keyword id="KW-0813">Transport</keyword>
<keyword id="KW-0862">Zinc</keyword>
<accession>Q7WFT1</accession>
<organism>
    <name type="scientific">Bordetella bronchiseptica (strain ATCC BAA-588 / NCTC 13252 / RB50)</name>
    <name type="common">Alcaligenes bronchisepticus</name>
    <dbReference type="NCBI Taxonomy" id="257310"/>
    <lineage>
        <taxon>Bacteria</taxon>
        <taxon>Pseudomonadati</taxon>
        <taxon>Pseudomonadota</taxon>
        <taxon>Betaproteobacteria</taxon>
        <taxon>Burkholderiales</taxon>
        <taxon>Alcaligenaceae</taxon>
        <taxon>Bordetella</taxon>
    </lineage>
</organism>
<evidence type="ECO:0000255" key="1">
    <source>
        <dbReference type="HAMAP-Rule" id="MF_01382"/>
    </source>
</evidence>
<protein>
    <recommendedName>
        <fullName evidence="1">Protein translocase subunit SecA</fullName>
        <ecNumber evidence="1">7.4.2.8</ecNumber>
    </recommendedName>
</protein>